<name>PAND_BACFN</name>
<evidence type="ECO:0000255" key="1">
    <source>
        <dbReference type="HAMAP-Rule" id="MF_00446"/>
    </source>
</evidence>
<organism>
    <name type="scientific">Bacteroides fragilis (strain ATCC 25285 / DSM 2151 / CCUG 4856 / JCM 11019 / LMG 10263 / NCTC 9343 / Onslow / VPI 2553 / EN-2)</name>
    <dbReference type="NCBI Taxonomy" id="272559"/>
    <lineage>
        <taxon>Bacteria</taxon>
        <taxon>Pseudomonadati</taxon>
        <taxon>Bacteroidota</taxon>
        <taxon>Bacteroidia</taxon>
        <taxon>Bacteroidales</taxon>
        <taxon>Bacteroidaceae</taxon>
        <taxon>Bacteroides</taxon>
    </lineage>
</organism>
<sequence>MMIEVLKSKIHCARVTEANLNYMGSITIDENLLDAANMIAGEKVYIADNNNGERFETYIIKGERGSGKICLNGAAARKVQPDDIVIIMSYALMDFEEAKSFKPTVIFPDPATNSVVK</sequence>
<keyword id="KW-0068">Autocatalytic cleavage</keyword>
<keyword id="KW-0963">Cytoplasm</keyword>
<keyword id="KW-0210">Decarboxylase</keyword>
<keyword id="KW-0456">Lyase</keyword>
<keyword id="KW-0566">Pantothenate biosynthesis</keyword>
<keyword id="KW-0670">Pyruvate</keyword>
<keyword id="KW-0704">Schiff base</keyword>
<keyword id="KW-0865">Zymogen</keyword>
<reference key="1">
    <citation type="journal article" date="2005" name="Science">
        <title>Extensive DNA inversions in the B. fragilis genome control variable gene expression.</title>
        <authorList>
            <person name="Cerdeno-Tarraga A.-M."/>
            <person name="Patrick S."/>
            <person name="Crossman L.C."/>
            <person name="Blakely G."/>
            <person name="Abratt V."/>
            <person name="Lennard N."/>
            <person name="Poxton I."/>
            <person name="Duerden B."/>
            <person name="Harris B."/>
            <person name="Quail M.A."/>
            <person name="Barron A."/>
            <person name="Clark L."/>
            <person name="Corton C."/>
            <person name="Doggett J."/>
            <person name="Holden M.T.G."/>
            <person name="Larke N."/>
            <person name="Line A."/>
            <person name="Lord A."/>
            <person name="Norbertczak H."/>
            <person name="Ormond D."/>
            <person name="Price C."/>
            <person name="Rabbinowitsch E."/>
            <person name="Woodward J."/>
            <person name="Barrell B.G."/>
            <person name="Parkhill J."/>
        </authorList>
    </citation>
    <scope>NUCLEOTIDE SEQUENCE [LARGE SCALE GENOMIC DNA]</scope>
    <source>
        <strain>ATCC 25285 / DSM 2151 / CCUG 4856 / JCM 11019 / LMG 10263 / NCTC 9343 / Onslow / VPI 2553 / EN-2</strain>
    </source>
</reference>
<accession>Q5LGS0</accession>
<dbReference type="EC" id="4.1.1.11" evidence="1"/>
<dbReference type="EMBL" id="CR626927">
    <property type="protein sequence ID" value="CAH06667.1"/>
    <property type="molecule type" value="Genomic_DNA"/>
</dbReference>
<dbReference type="RefSeq" id="WP_005785327.1">
    <property type="nucleotide sequence ID" value="NZ_UFTH01000001.1"/>
</dbReference>
<dbReference type="SMR" id="Q5LGS0"/>
<dbReference type="PaxDb" id="272559-BF9343_0886"/>
<dbReference type="GeneID" id="60368385"/>
<dbReference type="KEGG" id="bfs:BF9343_0886"/>
<dbReference type="eggNOG" id="COG0853">
    <property type="taxonomic scope" value="Bacteria"/>
</dbReference>
<dbReference type="HOGENOM" id="CLU_115305_2_0_10"/>
<dbReference type="UniPathway" id="UPA00028">
    <property type="reaction ID" value="UER00002"/>
</dbReference>
<dbReference type="Proteomes" id="UP000006731">
    <property type="component" value="Chromosome"/>
</dbReference>
<dbReference type="GO" id="GO:0005829">
    <property type="term" value="C:cytosol"/>
    <property type="evidence" value="ECO:0007669"/>
    <property type="project" value="TreeGrafter"/>
</dbReference>
<dbReference type="GO" id="GO:0004068">
    <property type="term" value="F:aspartate 1-decarboxylase activity"/>
    <property type="evidence" value="ECO:0007669"/>
    <property type="project" value="UniProtKB-UniRule"/>
</dbReference>
<dbReference type="GO" id="GO:0006523">
    <property type="term" value="P:alanine biosynthetic process"/>
    <property type="evidence" value="ECO:0007669"/>
    <property type="project" value="InterPro"/>
</dbReference>
<dbReference type="GO" id="GO:0015940">
    <property type="term" value="P:pantothenate biosynthetic process"/>
    <property type="evidence" value="ECO:0007669"/>
    <property type="project" value="UniProtKB-UniRule"/>
</dbReference>
<dbReference type="CDD" id="cd06919">
    <property type="entry name" value="Asp_decarbox"/>
    <property type="match status" value="1"/>
</dbReference>
<dbReference type="Gene3D" id="2.40.40.20">
    <property type="match status" value="1"/>
</dbReference>
<dbReference type="HAMAP" id="MF_00446">
    <property type="entry name" value="PanD"/>
    <property type="match status" value="1"/>
</dbReference>
<dbReference type="InterPro" id="IPR009010">
    <property type="entry name" value="Asp_de-COase-like_dom_sf"/>
</dbReference>
<dbReference type="InterPro" id="IPR003190">
    <property type="entry name" value="Asp_decarbox"/>
</dbReference>
<dbReference type="NCBIfam" id="TIGR00223">
    <property type="entry name" value="panD"/>
    <property type="match status" value="1"/>
</dbReference>
<dbReference type="PANTHER" id="PTHR21012">
    <property type="entry name" value="ASPARTATE 1-DECARBOXYLASE"/>
    <property type="match status" value="1"/>
</dbReference>
<dbReference type="PANTHER" id="PTHR21012:SF0">
    <property type="entry name" value="ASPARTATE 1-DECARBOXYLASE"/>
    <property type="match status" value="1"/>
</dbReference>
<dbReference type="Pfam" id="PF02261">
    <property type="entry name" value="Asp_decarbox"/>
    <property type="match status" value="1"/>
</dbReference>
<dbReference type="PIRSF" id="PIRSF006246">
    <property type="entry name" value="Asp_decarbox"/>
    <property type="match status" value="1"/>
</dbReference>
<dbReference type="SUPFAM" id="SSF50692">
    <property type="entry name" value="ADC-like"/>
    <property type="match status" value="1"/>
</dbReference>
<feature type="chain" id="PRO_0000236849" description="Aspartate 1-decarboxylase beta chain" evidence="1">
    <location>
        <begin position="1"/>
        <end position="24"/>
    </location>
</feature>
<feature type="chain" id="PRO_0000236850" description="Aspartate 1-decarboxylase alpha chain" evidence="1">
    <location>
        <begin position="25"/>
        <end position="117"/>
    </location>
</feature>
<feature type="active site" description="Schiff-base intermediate with substrate; via pyruvic acid" evidence="1">
    <location>
        <position position="25"/>
    </location>
</feature>
<feature type="active site" description="Proton donor" evidence="1">
    <location>
        <position position="58"/>
    </location>
</feature>
<feature type="binding site" evidence="1">
    <location>
        <position position="57"/>
    </location>
    <ligand>
        <name>substrate</name>
    </ligand>
</feature>
<feature type="binding site" evidence="1">
    <location>
        <begin position="73"/>
        <end position="75"/>
    </location>
    <ligand>
        <name>substrate</name>
    </ligand>
</feature>
<feature type="modified residue" description="Pyruvic acid (Ser)" evidence="1">
    <location>
        <position position="25"/>
    </location>
</feature>
<protein>
    <recommendedName>
        <fullName evidence="1">Aspartate 1-decarboxylase</fullName>
        <ecNumber evidence="1">4.1.1.11</ecNumber>
    </recommendedName>
    <alternativeName>
        <fullName evidence="1">Aspartate alpha-decarboxylase</fullName>
    </alternativeName>
    <component>
        <recommendedName>
            <fullName evidence="1">Aspartate 1-decarboxylase beta chain</fullName>
        </recommendedName>
    </component>
    <component>
        <recommendedName>
            <fullName evidence="1">Aspartate 1-decarboxylase alpha chain</fullName>
        </recommendedName>
    </component>
</protein>
<gene>
    <name evidence="1" type="primary">panD</name>
    <name type="ordered locus">BF0925</name>
</gene>
<proteinExistence type="inferred from homology"/>
<comment type="function">
    <text evidence="1">Catalyzes the pyruvoyl-dependent decarboxylation of aspartate to produce beta-alanine.</text>
</comment>
<comment type="catalytic activity">
    <reaction evidence="1">
        <text>L-aspartate + H(+) = beta-alanine + CO2</text>
        <dbReference type="Rhea" id="RHEA:19497"/>
        <dbReference type="ChEBI" id="CHEBI:15378"/>
        <dbReference type="ChEBI" id="CHEBI:16526"/>
        <dbReference type="ChEBI" id="CHEBI:29991"/>
        <dbReference type="ChEBI" id="CHEBI:57966"/>
        <dbReference type="EC" id="4.1.1.11"/>
    </reaction>
</comment>
<comment type="cofactor">
    <cofactor evidence="1">
        <name>pyruvate</name>
        <dbReference type="ChEBI" id="CHEBI:15361"/>
    </cofactor>
    <text evidence="1">Binds 1 pyruvoyl group covalently per subunit.</text>
</comment>
<comment type="pathway">
    <text evidence="1">Cofactor biosynthesis; (R)-pantothenate biosynthesis; beta-alanine from L-aspartate: step 1/1.</text>
</comment>
<comment type="subunit">
    <text evidence="1">Heterooctamer of four alpha and four beta subunits.</text>
</comment>
<comment type="subcellular location">
    <subcellularLocation>
        <location evidence="1">Cytoplasm</location>
    </subcellularLocation>
</comment>
<comment type="PTM">
    <text evidence="1">Is synthesized initially as an inactive proenzyme, which is activated by self-cleavage at a specific serine bond to produce a beta-subunit with a hydroxyl group at its C-terminus and an alpha-subunit with a pyruvoyl group at its N-terminus.</text>
</comment>
<comment type="similarity">
    <text evidence="1">Belongs to the PanD family.</text>
</comment>